<reference key="1">
    <citation type="journal article" date="2003" name="Int. Arch. Allergy Immunol.">
        <title>Cloning and molecular and immunological characterization of two new food allergens, Cap a 2 and Lyc e 1, profilins from bell pepper (Capsicum annuum) and Tomato (Lycopersicon esculentum).</title>
        <authorList>
            <person name="Willerroider M."/>
            <person name="Fuchs H."/>
            <person name="Ballmer-Weber B."/>
            <person name="Focke M."/>
            <person name="Susani M."/>
            <person name="Thalhamer J."/>
            <person name="Ferreira F."/>
            <person name="Wuethrich B."/>
            <person name="Scheiner O."/>
            <person name="Breiteneder H."/>
            <person name="Hoffman-Sommergruber K."/>
        </authorList>
    </citation>
    <scope>NUCLEOTIDE SEQUENCE [MRNA]</scope>
    <scope>ALLERGEN</scope>
    <source>
        <tissue>Fruit</tissue>
    </source>
</reference>
<evidence type="ECO:0000250" key="1"/>
<evidence type="ECO:0000269" key="2">
    <source>
    </source>
</evidence>
<evidence type="ECO:0000305" key="3"/>
<sequence length="131" mass="14257">MSWQTYVDEHLLCENEGNHLTSAAIIGQDGTVWAQSANFPQFKPEEITGIMNDFAVPGTLAPTGLYLGGTKYMVIQGEPEAVIRGKKGPGGITIKKTNQALIIGIYDEPMTPGQCNMIVERLGDYLIEQSL</sequence>
<organism>
    <name type="scientific">Solanum lycopersicum</name>
    <name type="common">Tomato</name>
    <name type="synonym">Lycopersicon esculentum</name>
    <dbReference type="NCBI Taxonomy" id="4081"/>
    <lineage>
        <taxon>Eukaryota</taxon>
        <taxon>Viridiplantae</taxon>
        <taxon>Streptophyta</taxon>
        <taxon>Embryophyta</taxon>
        <taxon>Tracheophyta</taxon>
        <taxon>Spermatophyta</taxon>
        <taxon>Magnoliopsida</taxon>
        <taxon>eudicotyledons</taxon>
        <taxon>Gunneridae</taxon>
        <taxon>Pentapetalae</taxon>
        <taxon>asterids</taxon>
        <taxon>lamiids</taxon>
        <taxon>Solanales</taxon>
        <taxon>Solanaceae</taxon>
        <taxon>Solanoideae</taxon>
        <taxon>Solaneae</taxon>
        <taxon>Solanum</taxon>
        <taxon>Solanum subgen. Lycopersicon</taxon>
    </lineage>
</organism>
<feature type="initiator methionine" description="Removed" evidence="1">
    <location>
        <position position="1"/>
    </location>
</feature>
<feature type="chain" id="PRO_0000199645" description="Profilin-2">
    <location>
        <begin position="2"/>
        <end position="131"/>
    </location>
</feature>
<dbReference type="EMBL" id="AJ417553">
    <property type="protein sequence ID" value="CAD10377.1"/>
    <property type="molecule type" value="mRNA"/>
</dbReference>
<dbReference type="RefSeq" id="NP_001233973.1">
    <property type="nucleotide sequence ID" value="NM_001247044.3"/>
</dbReference>
<dbReference type="SMR" id="Q93YG7"/>
<dbReference type="FunCoup" id="Q93YG7">
    <property type="interactions" value="1601"/>
</dbReference>
<dbReference type="STRING" id="4081.Q93YG7"/>
<dbReference type="Allergome" id="3358">
    <property type="allergen name" value="Sola l 1.0101"/>
</dbReference>
<dbReference type="Allergome" id="703">
    <property type="allergen name" value="Sola l 1"/>
</dbReference>
<dbReference type="PaxDb" id="4081-Solyc08g066110.2.1"/>
<dbReference type="EnsemblPlants" id="Solyc08g066110.3.1">
    <property type="protein sequence ID" value="Solyc08g066110.3.1"/>
    <property type="gene ID" value="Solyc08g066110.3"/>
</dbReference>
<dbReference type="GeneID" id="543782"/>
<dbReference type="Gramene" id="Solyc08g066110.3.1">
    <property type="protein sequence ID" value="Solyc08g066110.3.1"/>
    <property type="gene ID" value="Solyc08g066110.3"/>
</dbReference>
<dbReference type="KEGG" id="sly:543782"/>
<dbReference type="eggNOG" id="KOG1755">
    <property type="taxonomic scope" value="Eukaryota"/>
</dbReference>
<dbReference type="HOGENOM" id="CLU_120772_0_1_1"/>
<dbReference type="InParanoid" id="Q93YG7"/>
<dbReference type="OMA" id="HHAENVQ"/>
<dbReference type="OrthoDB" id="421374at2759"/>
<dbReference type="PhylomeDB" id="Q93YG7"/>
<dbReference type="Proteomes" id="UP000004994">
    <property type="component" value="Chromosome 8"/>
</dbReference>
<dbReference type="GO" id="GO:0005938">
    <property type="term" value="C:cell cortex"/>
    <property type="evidence" value="ECO:0000318"/>
    <property type="project" value="GO_Central"/>
</dbReference>
<dbReference type="GO" id="GO:0005856">
    <property type="term" value="C:cytoskeleton"/>
    <property type="evidence" value="ECO:0007669"/>
    <property type="project" value="UniProtKB-SubCell"/>
</dbReference>
<dbReference type="GO" id="GO:0003785">
    <property type="term" value="F:actin monomer binding"/>
    <property type="evidence" value="ECO:0000318"/>
    <property type="project" value="GO_Central"/>
</dbReference>
<dbReference type="CDD" id="cd00148">
    <property type="entry name" value="PROF"/>
    <property type="match status" value="1"/>
</dbReference>
<dbReference type="FunFam" id="3.30.450.30:FF:000001">
    <property type="entry name" value="Profilin"/>
    <property type="match status" value="1"/>
</dbReference>
<dbReference type="Gene3D" id="3.30.450.30">
    <property type="entry name" value="Dynein light chain 2a, cytoplasmic"/>
    <property type="match status" value="1"/>
</dbReference>
<dbReference type="InterPro" id="IPR048278">
    <property type="entry name" value="PFN"/>
</dbReference>
<dbReference type="InterPro" id="IPR005455">
    <property type="entry name" value="PFN_euk"/>
</dbReference>
<dbReference type="InterPro" id="IPR036140">
    <property type="entry name" value="PFN_sf"/>
</dbReference>
<dbReference type="InterPro" id="IPR027310">
    <property type="entry name" value="Profilin_CS"/>
</dbReference>
<dbReference type="PANTHER" id="PTHR11604">
    <property type="entry name" value="PROFILIN"/>
    <property type="match status" value="1"/>
</dbReference>
<dbReference type="PANTHER" id="PTHR11604:SF49">
    <property type="entry name" value="PROFILIN-2"/>
    <property type="match status" value="1"/>
</dbReference>
<dbReference type="Pfam" id="PF00235">
    <property type="entry name" value="Profilin"/>
    <property type="match status" value="1"/>
</dbReference>
<dbReference type="PRINTS" id="PR00392">
    <property type="entry name" value="PROFILIN"/>
</dbReference>
<dbReference type="PRINTS" id="PR01640">
    <property type="entry name" value="PROFILINPLNT"/>
</dbReference>
<dbReference type="SMART" id="SM00392">
    <property type="entry name" value="PROF"/>
    <property type="match status" value="1"/>
</dbReference>
<dbReference type="SUPFAM" id="SSF55770">
    <property type="entry name" value="Profilin (actin-binding protein)"/>
    <property type="match status" value="1"/>
</dbReference>
<dbReference type="PROSITE" id="PS00414">
    <property type="entry name" value="PROFILIN"/>
    <property type="match status" value="1"/>
</dbReference>
<accession>Q93YG7</accession>
<comment type="function">
    <text evidence="1">Binds to actin and affects the structure of the cytoskeleton. At high concentrations, profilin prevents the polymerization of actin, whereas it enhances it at low concentrations. By binding to PIP2, it inhibits the formation of IP3 and DG (By similarity).</text>
</comment>
<comment type="subunit">
    <text>Occurs in many kinds of cells as a complex with monomeric actin in a 1:1 ratio.</text>
</comment>
<comment type="subcellular location">
    <subcellularLocation>
        <location evidence="1">Cytoplasm</location>
        <location evidence="1">Cytoskeleton</location>
    </subcellularLocation>
</comment>
<comment type="allergen">
    <text evidence="2">Causes an allergic reaction in human. Binds to IgE. This is a food allergen.</text>
</comment>
<comment type="similarity">
    <text evidence="3">Belongs to the profilin family.</text>
</comment>
<protein>
    <recommendedName>
        <fullName>Profilin-2</fullName>
    </recommendedName>
    <alternativeName>
        <fullName>Minor food allergen Lyc e 1</fullName>
    </alternativeName>
    <allergenName>Lyc e 1</allergenName>
</protein>
<proteinExistence type="evidence at protein level"/>
<name>PROF2_SOLLC</name>
<keyword id="KW-0009">Actin-binding</keyword>
<keyword id="KW-0020">Allergen</keyword>
<keyword id="KW-0963">Cytoplasm</keyword>
<keyword id="KW-0206">Cytoskeleton</keyword>
<keyword id="KW-1185">Reference proteome</keyword>